<name>GLPK_BACC0</name>
<accession>B7JCV9</accession>
<evidence type="ECO:0000255" key="1">
    <source>
        <dbReference type="HAMAP-Rule" id="MF_00186"/>
    </source>
</evidence>
<keyword id="KW-0067">ATP-binding</keyword>
<keyword id="KW-0319">Glycerol metabolism</keyword>
<keyword id="KW-0418">Kinase</keyword>
<keyword id="KW-0547">Nucleotide-binding</keyword>
<keyword id="KW-0597">Phosphoprotein</keyword>
<keyword id="KW-0808">Transferase</keyword>
<comment type="function">
    <text evidence="1">Key enzyme in the regulation of glycerol uptake and metabolism. Catalyzes the phosphorylation of glycerol to yield sn-glycerol 3-phosphate.</text>
</comment>
<comment type="catalytic activity">
    <reaction evidence="1">
        <text>glycerol + ATP = sn-glycerol 3-phosphate + ADP + H(+)</text>
        <dbReference type="Rhea" id="RHEA:21644"/>
        <dbReference type="ChEBI" id="CHEBI:15378"/>
        <dbReference type="ChEBI" id="CHEBI:17754"/>
        <dbReference type="ChEBI" id="CHEBI:30616"/>
        <dbReference type="ChEBI" id="CHEBI:57597"/>
        <dbReference type="ChEBI" id="CHEBI:456216"/>
        <dbReference type="EC" id="2.7.1.30"/>
    </reaction>
</comment>
<comment type="activity regulation">
    <text evidence="1">Activated by phosphorylation and inhibited by fructose 1,6-bisphosphate (FBP).</text>
</comment>
<comment type="pathway">
    <text evidence="1">Polyol metabolism; glycerol degradation via glycerol kinase pathway; sn-glycerol 3-phosphate from glycerol: step 1/1.</text>
</comment>
<comment type="subunit">
    <text evidence="1">Homotetramer and homodimer (in equilibrium).</text>
</comment>
<comment type="PTM">
    <text evidence="1">The phosphoenolpyruvate-dependent sugar phosphotransferase system (PTS), including enzyme I, and histidine-containing protein (HPr) are required for the phosphorylation, which leads to the activation of the enzyme.</text>
</comment>
<comment type="similarity">
    <text evidence="1">Belongs to the FGGY kinase family.</text>
</comment>
<sequence length="496" mass="55044">MKKYILSLDQGTTSSRAILFNKKGEIVHSAQKEFTQHFPKPGWVEHNAQEIWGSILAVIATCLSEADVKPEQIAGIGITNQRETAVVWDKTTGKPIYNAIVWQSRQTAEICDELKEKGYSEMVREKTGLLIDAYFSGTKVKWILDNVEGAREKAENGDLLFGTIDTWLVWKLSGGKAHVTDYSNASRTLMFNIHDLQWDDELLDMLTVPKSMLPEVRPSSEVYGETIDYHFFGQNVPIAGVAGDQQAALFGQACFGEGMAKNTYGTGCFMLMNTGEKAVASEHGLLTTIAWGIDGKVNYALEGSIFVAGSAIQWLRDGMRMFKDASESEVYASRVESTDGVYVVPAFVGLGTPYWDSEVRGAMFGVTRGTTKEHFIRATLESLAYQTKDVLCAMEADSGIELKTLRVDGGAVKNNFLMKFQSDILDVPVERPVINETTALGAAYLAGLAVGYWKNQDEIKEQWHMDKRFEPTMEAETSEELYAGWKKAIEATKAFK</sequence>
<organism>
    <name type="scientific">Bacillus cereus (strain AH820)</name>
    <dbReference type="NCBI Taxonomy" id="405535"/>
    <lineage>
        <taxon>Bacteria</taxon>
        <taxon>Bacillati</taxon>
        <taxon>Bacillota</taxon>
        <taxon>Bacilli</taxon>
        <taxon>Bacillales</taxon>
        <taxon>Bacillaceae</taxon>
        <taxon>Bacillus</taxon>
        <taxon>Bacillus cereus group</taxon>
    </lineage>
</organism>
<reference key="1">
    <citation type="submission" date="2008-10" db="EMBL/GenBank/DDBJ databases">
        <title>Genome sequence of Bacillus cereus AH820.</title>
        <authorList>
            <person name="Dodson R.J."/>
            <person name="Durkin A.S."/>
            <person name="Rosovitz M.J."/>
            <person name="Rasko D.A."/>
            <person name="Hoffmaster A."/>
            <person name="Ravel J."/>
            <person name="Sutton G."/>
        </authorList>
    </citation>
    <scope>NUCLEOTIDE SEQUENCE [LARGE SCALE GENOMIC DNA]</scope>
    <source>
        <strain>AH820</strain>
    </source>
</reference>
<protein>
    <recommendedName>
        <fullName evidence="1">Glycerol kinase</fullName>
        <ecNumber evidence="1">2.7.1.30</ecNumber>
    </recommendedName>
    <alternativeName>
        <fullName evidence="1">ATP:glycerol 3-phosphotransferase</fullName>
    </alternativeName>
    <alternativeName>
        <fullName evidence="1">Glycerokinase</fullName>
        <shortName evidence="1">GK</shortName>
    </alternativeName>
</protein>
<feature type="chain" id="PRO_1000118542" description="Glycerol kinase">
    <location>
        <begin position="1"/>
        <end position="496"/>
    </location>
</feature>
<feature type="binding site" evidence="1">
    <location>
        <position position="12"/>
    </location>
    <ligand>
        <name>ADP</name>
        <dbReference type="ChEBI" id="CHEBI:456216"/>
    </ligand>
</feature>
<feature type="binding site" evidence="1">
    <location>
        <position position="12"/>
    </location>
    <ligand>
        <name>ATP</name>
        <dbReference type="ChEBI" id="CHEBI:30616"/>
    </ligand>
</feature>
<feature type="binding site" evidence="1">
    <location>
        <position position="12"/>
    </location>
    <ligand>
        <name>sn-glycerol 3-phosphate</name>
        <dbReference type="ChEBI" id="CHEBI:57597"/>
    </ligand>
</feature>
<feature type="binding site" evidence="1">
    <location>
        <position position="13"/>
    </location>
    <ligand>
        <name>ATP</name>
        <dbReference type="ChEBI" id="CHEBI:30616"/>
    </ligand>
</feature>
<feature type="binding site" evidence="1">
    <location>
        <position position="14"/>
    </location>
    <ligand>
        <name>ATP</name>
        <dbReference type="ChEBI" id="CHEBI:30616"/>
    </ligand>
</feature>
<feature type="binding site" evidence="1">
    <location>
        <position position="16"/>
    </location>
    <ligand>
        <name>ADP</name>
        <dbReference type="ChEBI" id="CHEBI:456216"/>
    </ligand>
</feature>
<feature type="binding site" evidence="1">
    <location>
        <position position="82"/>
    </location>
    <ligand>
        <name>glycerol</name>
        <dbReference type="ChEBI" id="CHEBI:17754"/>
    </ligand>
</feature>
<feature type="binding site" evidence="1">
    <location>
        <position position="82"/>
    </location>
    <ligand>
        <name>sn-glycerol 3-phosphate</name>
        <dbReference type="ChEBI" id="CHEBI:57597"/>
    </ligand>
</feature>
<feature type="binding site" evidence="1">
    <location>
        <position position="83"/>
    </location>
    <ligand>
        <name>glycerol</name>
        <dbReference type="ChEBI" id="CHEBI:17754"/>
    </ligand>
</feature>
<feature type="binding site" evidence="1">
    <location>
        <position position="83"/>
    </location>
    <ligand>
        <name>sn-glycerol 3-phosphate</name>
        <dbReference type="ChEBI" id="CHEBI:57597"/>
    </ligand>
</feature>
<feature type="binding site" evidence="1">
    <location>
        <position position="134"/>
    </location>
    <ligand>
        <name>glycerol</name>
        <dbReference type="ChEBI" id="CHEBI:17754"/>
    </ligand>
</feature>
<feature type="binding site" evidence="1">
    <location>
        <position position="134"/>
    </location>
    <ligand>
        <name>sn-glycerol 3-phosphate</name>
        <dbReference type="ChEBI" id="CHEBI:57597"/>
    </ligand>
</feature>
<feature type="binding site" evidence="1">
    <location>
        <position position="244"/>
    </location>
    <ligand>
        <name>glycerol</name>
        <dbReference type="ChEBI" id="CHEBI:17754"/>
    </ligand>
</feature>
<feature type="binding site" evidence="1">
    <location>
        <position position="244"/>
    </location>
    <ligand>
        <name>sn-glycerol 3-phosphate</name>
        <dbReference type="ChEBI" id="CHEBI:57597"/>
    </ligand>
</feature>
<feature type="binding site" evidence="1">
    <location>
        <position position="245"/>
    </location>
    <ligand>
        <name>glycerol</name>
        <dbReference type="ChEBI" id="CHEBI:17754"/>
    </ligand>
</feature>
<feature type="binding site" evidence="1">
    <location>
        <position position="266"/>
    </location>
    <ligand>
        <name>ADP</name>
        <dbReference type="ChEBI" id="CHEBI:456216"/>
    </ligand>
</feature>
<feature type="binding site" evidence="1">
    <location>
        <position position="266"/>
    </location>
    <ligand>
        <name>ATP</name>
        <dbReference type="ChEBI" id="CHEBI:30616"/>
    </ligand>
</feature>
<feature type="binding site" evidence="1">
    <location>
        <position position="309"/>
    </location>
    <ligand>
        <name>ADP</name>
        <dbReference type="ChEBI" id="CHEBI:456216"/>
    </ligand>
</feature>
<feature type="binding site" evidence="1">
    <location>
        <position position="309"/>
    </location>
    <ligand>
        <name>ATP</name>
        <dbReference type="ChEBI" id="CHEBI:30616"/>
    </ligand>
</feature>
<feature type="binding site" evidence="1">
    <location>
        <position position="313"/>
    </location>
    <ligand>
        <name>ATP</name>
        <dbReference type="ChEBI" id="CHEBI:30616"/>
    </ligand>
</feature>
<feature type="binding site" evidence="1">
    <location>
        <position position="410"/>
    </location>
    <ligand>
        <name>ADP</name>
        <dbReference type="ChEBI" id="CHEBI:456216"/>
    </ligand>
</feature>
<feature type="binding site" evidence="1">
    <location>
        <position position="410"/>
    </location>
    <ligand>
        <name>ATP</name>
        <dbReference type="ChEBI" id="CHEBI:30616"/>
    </ligand>
</feature>
<feature type="binding site" evidence="1">
    <location>
        <position position="414"/>
    </location>
    <ligand>
        <name>ADP</name>
        <dbReference type="ChEBI" id="CHEBI:456216"/>
    </ligand>
</feature>
<feature type="modified residue" description="Phosphohistidine; by HPr" evidence="1">
    <location>
        <position position="230"/>
    </location>
</feature>
<proteinExistence type="inferred from homology"/>
<dbReference type="EC" id="2.7.1.30" evidence="1"/>
<dbReference type="EMBL" id="CP001283">
    <property type="protein sequence ID" value="ACK90506.1"/>
    <property type="molecule type" value="Genomic_DNA"/>
</dbReference>
<dbReference type="RefSeq" id="WP_000759995.1">
    <property type="nucleotide sequence ID" value="NC_011773.1"/>
</dbReference>
<dbReference type="SMR" id="B7JCV9"/>
<dbReference type="KEGG" id="bcu:BCAH820_1106"/>
<dbReference type="HOGENOM" id="CLU_009281_2_3_9"/>
<dbReference type="UniPathway" id="UPA00618">
    <property type="reaction ID" value="UER00672"/>
</dbReference>
<dbReference type="Proteomes" id="UP000001363">
    <property type="component" value="Chromosome"/>
</dbReference>
<dbReference type="GO" id="GO:0005829">
    <property type="term" value="C:cytosol"/>
    <property type="evidence" value="ECO:0007669"/>
    <property type="project" value="TreeGrafter"/>
</dbReference>
<dbReference type="GO" id="GO:0005524">
    <property type="term" value="F:ATP binding"/>
    <property type="evidence" value="ECO:0007669"/>
    <property type="project" value="UniProtKB-UniRule"/>
</dbReference>
<dbReference type="GO" id="GO:0004370">
    <property type="term" value="F:glycerol kinase activity"/>
    <property type="evidence" value="ECO:0000250"/>
    <property type="project" value="UniProtKB"/>
</dbReference>
<dbReference type="GO" id="GO:0019563">
    <property type="term" value="P:glycerol catabolic process"/>
    <property type="evidence" value="ECO:0007669"/>
    <property type="project" value="UniProtKB-UniRule"/>
</dbReference>
<dbReference type="GO" id="GO:0006071">
    <property type="term" value="P:glycerol metabolic process"/>
    <property type="evidence" value="ECO:0000250"/>
    <property type="project" value="UniProtKB"/>
</dbReference>
<dbReference type="GO" id="GO:0006072">
    <property type="term" value="P:glycerol-3-phosphate metabolic process"/>
    <property type="evidence" value="ECO:0007669"/>
    <property type="project" value="InterPro"/>
</dbReference>
<dbReference type="CDD" id="cd07786">
    <property type="entry name" value="FGGY_EcGK_like"/>
    <property type="match status" value="1"/>
</dbReference>
<dbReference type="FunFam" id="3.30.420.40:FF:000007">
    <property type="entry name" value="Glycerol kinase"/>
    <property type="match status" value="1"/>
</dbReference>
<dbReference type="FunFam" id="3.30.420.40:FF:000008">
    <property type="entry name" value="Glycerol kinase"/>
    <property type="match status" value="1"/>
</dbReference>
<dbReference type="Gene3D" id="3.30.420.40">
    <property type="match status" value="2"/>
</dbReference>
<dbReference type="HAMAP" id="MF_00186">
    <property type="entry name" value="Glycerol_kin"/>
    <property type="match status" value="1"/>
</dbReference>
<dbReference type="InterPro" id="IPR043129">
    <property type="entry name" value="ATPase_NBD"/>
</dbReference>
<dbReference type="InterPro" id="IPR000577">
    <property type="entry name" value="Carb_kinase_FGGY"/>
</dbReference>
<dbReference type="InterPro" id="IPR018483">
    <property type="entry name" value="Carb_kinase_FGGY_CS"/>
</dbReference>
<dbReference type="InterPro" id="IPR018485">
    <property type="entry name" value="FGGY_C"/>
</dbReference>
<dbReference type="InterPro" id="IPR018484">
    <property type="entry name" value="FGGY_N"/>
</dbReference>
<dbReference type="InterPro" id="IPR005999">
    <property type="entry name" value="Glycerol_kin"/>
</dbReference>
<dbReference type="NCBIfam" id="TIGR01311">
    <property type="entry name" value="glycerol_kin"/>
    <property type="match status" value="1"/>
</dbReference>
<dbReference type="NCBIfam" id="NF000756">
    <property type="entry name" value="PRK00047.1"/>
    <property type="match status" value="1"/>
</dbReference>
<dbReference type="PANTHER" id="PTHR10196:SF69">
    <property type="entry name" value="GLYCEROL KINASE"/>
    <property type="match status" value="1"/>
</dbReference>
<dbReference type="PANTHER" id="PTHR10196">
    <property type="entry name" value="SUGAR KINASE"/>
    <property type="match status" value="1"/>
</dbReference>
<dbReference type="Pfam" id="PF02782">
    <property type="entry name" value="FGGY_C"/>
    <property type="match status" value="1"/>
</dbReference>
<dbReference type="Pfam" id="PF00370">
    <property type="entry name" value="FGGY_N"/>
    <property type="match status" value="1"/>
</dbReference>
<dbReference type="PIRSF" id="PIRSF000538">
    <property type="entry name" value="GlpK"/>
    <property type="match status" value="1"/>
</dbReference>
<dbReference type="SUPFAM" id="SSF53067">
    <property type="entry name" value="Actin-like ATPase domain"/>
    <property type="match status" value="2"/>
</dbReference>
<dbReference type="PROSITE" id="PS00933">
    <property type="entry name" value="FGGY_KINASES_1"/>
    <property type="match status" value="1"/>
</dbReference>
<dbReference type="PROSITE" id="PS00445">
    <property type="entry name" value="FGGY_KINASES_2"/>
    <property type="match status" value="1"/>
</dbReference>
<gene>
    <name evidence="1" type="primary">glpK</name>
    <name type="ordered locus">BCAH820_1106</name>
</gene>